<accession>B0M3B6</accession>
<dbReference type="GO" id="GO:0005576">
    <property type="term" value="C:extracellular region"/>
    <property type="evidence" value="ECO:0007669"/>
    <property type="project" value="UniProtKB-SubCell"/>
</dbReference>
<dbReference type="GO" id="GO:0007218">
    <property type="term" value="P:neuropeptide signaling pathway"/>
    <property type="evidence" value="ECO:0007669"/>
    <property type="project" value="UniProtKB-KW"/>
</dbReference>
<protein>
    <recommendedName>
        <fullName evidence="4">Pyrokinin-1</fullName>
        <shortName evidence="4">PK-1</shortName>
    </recommendedName>
    <alternativeName>
        <fullName evidence="1">YXPRL-amide</fullName>
    </alternativeName>
</protein>
<evidence type="ECO:0000250" key="1">
    <source>
        <dbReference type="UniProtKB" id="P82619"/>
    </source>
</evidence>
<evidence type="ECO:0000255" key="2"/>
<evidence type="ECO:0000269" key="3">
    <source>
    </source>
</evidence>
<evidence type="ECO:0000303" key="4">
    <source>
    </source>
</evidence>
<evidence type="ECO:0000305" key="5"/>
<evidence type="ECO:0000305" key="6">
    <source>
    </source>
</evidence>
<organism>
    <name type="scientific">Striatophasma naukluftense</name>
    <name type="common">Gladiator</name>
    <name type="synonym">Heel-walker</name>
    <dbReference type="NCBI Taxonomy" id="1041429"/>
    <lineage>
        <taxon>Eukaryota</taxon>
        <taxon>Metazoa</taxon>
        <taxon>Ecdysozoa</taxon>
        <taxon>Arthropoda</taxon>
        <taxon>Hexapoda</taxon>
        <taxon>Insecta</taxon>
        <taxon>Pterygota</taxon>
        <taxon>Neoptera</taxon>
        <taxon>Polyneoptera</taxon>
        <taxon>Mantophasmatodea</taxon>
        <taxon>Austrophasmatidae</taxon>
        <taxon>Striatophasma</taxon>
    </lineage>
</organism>
<feature type="peptide" id="PRO_0000420750" description="Pyrokinin-1" evidence="3">
    <location>
        <begin position="1"/>
        <end position="7"/>
    </location>
</feature>
<feature type="modified residue" description="Leucine amide" evidence="3">
    <location>
        <position position="7"/>
    </location>
</feature>
<comment type="function">
    <text evidence="1">Myoactive.</text>
</comment>
<comment type="subcellular location">
    <subcellularLocation>
        <location evidence="6">Secreted</location>
    </subcellularLocation>
</comment>
<comment type="similarity">
    <text evidence="2">Belongs to the pyrokinin family.</text>
</comment>
<reference evidence="5" key="1">
    <citation type="journal article" date="2012" name="Syst. Biol.">
        <title>Peptidomics-based phylogeny and biogeography of Mantophasmatodea (Hexapoda).</title>
        <authorList>
            <person name="Predel R."/>
            <person name="Neupert S."/>
            <person name="Huetteroth W."/>
            <person name="Kahnt J."/>
            <person name="Waidelich D."/>
            <person name="Roth S."/>
        </authorList>
    </citation>
    <scope>PROTEIN SEQUENCE</scope>
    <scope>AMIDATION AT LEU-7</scope>
    <source>
        <tissue evidence="3">Corpora cardiaca</tissue>
    </source>
</reference>
<proteinExistence type="evidence at protein level"/>
<keyword id="KW-0027">Amidation</keyword>
<keyword id="KW-0903">Direct protein sequencing</keyword>
<keyword id="KW-0527">Neuropeptide</keyword>
<keyword id="KW-0964">Secreted</keyword>
<sequence length="7" mass="821">DGYTPRL</sequence>
<name>PPK1_STRNA</name>